<comment type="function">
    <text evidence="1">Associates with the EF-Tu.GDP complex and induces the exchange of GDP to GTP. It remains bound to the aminoacyl-tRNA.EF-Tu.GTP complex up to the GTP hydrolysis stage on the ribosome.</text>
</comment>
<comment type="subcellular location">
    <subcellularLocation>
        <location evidence="1">Cytoplasm</location>
    </subcellularLocation>
</comment>
<comment type="similarity">
    <text evidence="1">Belongs to the EF-Ts family.</text>
</comment>
<accession>Q1QDT0</accession>
<keyword id="KW-0963">Cytoplasm</keyword>
<keyword id="KW-0251">Elongation factor</keyword>
<keyword id="KW-0648">Protein biosynthesis</keyword>
<sequence>MSEVKVSAKMVKELRDRTGLGMMECKKALEESNGDVETAIDNLRKSGQAKAAKKAGNIAADGAIIIAQGDSKAFLLEVNCQTDFVAKDENFAAFAETVANLALENNVTDVAAIAELPYGNGQTVEEARVSLVQKIGENIQIRRVEVLEGANIAAYRHGLRIGVVVSYEGGSAETGKNLAMHIAAFNPVAVADEDVAADLLAREKDIIEAKARESGKPDNIVEKMIEGGLRKYLEEVTLLRQPYVMDNEKKVGDVLKAEGVKVLGFKRLEVGEGIEKKQEDFAAEVAATQALANK</sequence>
<name>EFTS_PSYCK</name>
<reference key="1">
    <citation type="submission" date="2006-03" db="EMBL/GenBank/DDBJ databases">
        <title>Complete sequence of chromosome of Psychrobacter cryohalolentis K5.</title>
        <authorList>
            <consortium name="US DOE Joint Genome Institute"/>
            <person name="Copeland A."/>
            <person name="Lucas S."/>
            <person name="Lapidus A."/>
            <person name="Barry K."/>
            <person name="Detter J.C."/>
            <person name="Glavina T."/>
            <person name="Hammon N."/>
            <person name="Israni S."/>
            <person name="Dalin E."/>
            <person name="Tice H."/>
            <person name="Pitluck S."/>
            <person name="Brettin T."/>
            <person name="Bruce D."/>
            <person name="Han C."/>
            <person name="Tapia R."/>
            <person name="Sims D.R."/>
            <person name="Gilna P."/>
            <person name="Schmutz J."/>
            <person name="Larimer F."/>
            <person name="Land M."/>
            <person name="Hauser L."/>
            <person name="Kyrpides N."/>
            <person name="Kim E."/>
            <person name="Richardson P."/>
        </authorList>
    </citation>
    <scope>NUCLEOTIDE SEQUENCE [LARGE SCALE GENOMIC DNA]</scope>
    <source>
        <strain>ATCC BAA-1226 / DSM 17306 / VKM B-2378 / K5</strain>
    </source>
</reference>
<evidence type="ECO:0000255" key="1">
    <source>
        <dbReference type="HAMAP-Rule" id="MF_00050"/>
    </source>
</evidence>
<feature type="chain" id="PRO_0000241513" description="Elongation factor Ts">
    <location>
        <begin position="1"/>
        <end position="294"/>
    </location>
</feature>
<feature type="region of interest" description="Involved in Mg(2+) ion dislocation from EF-Tu" evidence="1">
    <location>
        <begin position="82"/>
        <end position="85"/>
    </location>
</feature>
<protein>
    <recommendedName>
        <fullName evidence="1">Elongation factor Ts</fullName>
        <shortName evidence="1">EF-Ts</shortName>
    </recommendedName>
</protein>
<proteinExistence type="inferred from homology"/>
<dbReference type="EMBL" id="CP000323">
    <property type="protein sequence ID" value="ABE74173.1"/>
    <property type="molecule type" value="Genomic_DNA"/>
</dbReference>
<dbReference type="RefSeq" id="WP_011512758.1">
    <property type="nucleotide sequence ID" value="NC_007969.1"/>
</dbReference>
<dbReference type="SMR" id="Q1QDT0"/>
<dbReference type="STRING" id="335284.Pcryo_0390"/>
<dbReference type="KEGG" id="pcr:Pcryo_0390"/>
<dbReference type="eggNOG" id="COG0264">
    <property type="taxonomic scope" value="Bacteria"/>
</dbReference>
<dbReference type="HOGENOM" id="CLU_047155_0_2_6"/>
<dbReference type="Proteomes" id="UP000002425">
    <property type="component" value="Chromosome"/>
</dbReference>
<dbReference type="GO" id="GO:0005737">
    <property type="term" value="C:cytoplasm"/>
    <property type="evidence" value="ECO:0007669"/>
    <property type="project" value="UniProtKB-SubCell"/>
</dbReference>
<dbReference type="GO" id="GO:0003746">
    <property type="term" value="F:translation elongation factor activity"/>
    <property type="evidence" value="ECO:0007669"/>
    <property type="project" value="UniProtKB-UniRule"/>
</dbReference>
<dbReference type="CDD" id="cd14275">
    <property type="entry name" value="UBA_EF-Ts"/>
    <property type="match status" value="1"/>
</dbReference>
<dbReference type="FunFam" id="1.10.286.20:FF:000001">
    <property type="entry name" value="Elongation factor Ts"/>
    <property type="match status" value="1"/>
</dbReference>
<dbReference type="FunFam" id="1.10.8.10:FF:000001">
    <property type="entry name" value="Elongation factor Ts"/>
    <property type="match status" value="1"/>
</dbReference>
<dbReference type="FunFam" id="3.30.479.20:FF:000001">
    <property type="entry name" value="Elongation factor Ts"/>
    <property type="match status" value="1"/>
</dbReference>
<dbReference type="Gene3D" id="1.10.286.20">
    <property type="match status" value="1"/>
</dbReference>
<dbReference type="Gene3D" id="1.10.8.10">
    <property type="entry name" value="DNA helicase RuvA subunit, C-terminal domain"/>
    <property type="match status" value="1"/>
</dbReference>
<dbReference type="Gene3D" id="3.30.479.20">
    <property type="entry name" value="Elongation factor Ts, dimerisation domain"/>
    <property type="match status" value="2"/>
</dbReference>
<dbReference type="HAMAP" id="MF_00050">
    <property type="entry name" value="EF_Ts"/>
    <property type="match status" value="1"/>
</dbReference>
<dbReference type="InterPro" id="IPR036402">
    <property type="entry name" value="EF-Ts_dimer_sf"/>
</dbReference>
<dbReference type="InterPro" id="IPR001816">
    <property type="entry name" value="Transl_elong_EFTs/EF1B"/>
</dbReference>
<dbReference type="InterPro" id="IPR014039">
    <property type="entry name" value="Transl_elong_EFTs/EF1B_dimer"/>
</dbReference>
<dbReference type="InterPro" id="IPR018101">
    <property type="entry name" value="Transl_elong_Ts_CS"/>
</dbReference>
<dbReference type="InterPro" id="IPR009060">
    <property type="entry name" value="UBA-like_sf"/>
</dbReference>
<dbReference type="NCBIfam" id="TIGR00116">
    <property type="entry name" value="tsf"/>
    <property type="match status" value="1"/>
</dbReference>
<dbReference type="PANTHER" id="PTHR11741">
    <property type="entry name" value="ELONGATION FACTOR TS"/>
    <property type="match status" value="1"/>
</dbReference>
<dbReference type="PANTHER" id="PTHR11741:SF0">
    <property type="entry name" value="ELONGATION FACTOR TS, MITOCHONDRIAL"/>
    <property type="match status" value="1"/>
</dbReference>
<dbReference type="Pfam" id="PF00889">
    <property type="entry name" value="EF_TS"/>
    <property type="match status" value="1"/>
</dbReference>
<dbReference type="SUPFAM" id="SSF54713">
    <property type="entry name" value="Elongation factor Ts (EF-Ts), dimerisation domain"/>
    <property type="match status" value="2"/>
</dbReference>
<dbReference type="SUPFAM" id="SSF46934">
    <property type="entry name" value="UBA-like"/>
    <property type="match status" value="1"/>
</dbReference>
<dbReference type="PROSITE" id="PS01126">
    <property type="entry name" value="EF_TS_1"/>
    <property type="match status" value="1"/>
</dbReference>
<dbReference type="PROSITE" id="PS01127">
    <property type="entry name" value="EF_TS_2"/>
    <property type="match status" value="1"/>
</dbReference>
<gene>
    <name evidence="1" type="primary">tsf</name>
    <name type="ordered locus">Pcryo_0390</name>
</gene>
<organism>
    <name type="scientific">Psychrobacter cryohalolentis (strain ATCC BAA-1226 / DSM 17306 / VKM B-2378 / K5)</name>
    <dbReference type="NCBI Taxonomy" id="335284"/>
    <lineage>
        <taxon>Bacteria</taxon>
        <taxon>Pseudomonadati</taxon>
        <taxon>Pseudomonadota</taxon>
        <taxon>Gammaproteobacteria</taxon>
        <taxon>Moraxellales</taxon>
        <taxon>Moraxellaceae</taxon>
        <taxon>Psychrobacter</taxon>
    </lineage>
</organism>